<protein>
    <recommendedName>
        <fullName evidence="1">ATP-dependent dethiobiotin synthetase BioD</fullName>
        <ecNumber evidence="1">6.3.3.3</ecNumber>
    </recommendedName>
    <alternativeName>
        <fullName evidence="1">DTB synthetase</fullName>
        <shortName evidence="1">DTBS</shortName>
    </alternativeName>
    <alternativeName>
        <fullName evidence="1">Dethiobiotin synthase</fullName>
    </alternativeName>
</protein>
<proteinExistence type="inferred from homology"/>
<keyword id="KW-0067">ATP-binding</keyword>
<keyword id="KW-0093">Biotin biosynthesis</keyword>
<keyword id="KW-0963">Cytoplasm</keyword>
<keyword id="KW-0436">Ligase</keyword>
<keyword id="KW-0460">Magnesium</keyword>
<keyword id="KW-0479">Metal-binding</keyword>
<keyword id="KW-0547">Nucleotide-binding</keyword>
<keyword id="KW-1185">Reference proteome</keyword>
<reference key="1">
    <citation type="journal article" date="2008" name="BMC Genomics">
        <title>Complete genome of Phenylobacterium zucineum - a novel facultative intracellular bacterium isolated from human erythroleukemia cell line K562.</title>
        <authorList>
            <person name="Luo Y."/>
            <person name="Xu X."/>
            <person name="Ding Z."/>
            <person name="Liu Z."/>
            <person name="Zhang B."/>
            <person name="Yan Z."/>
            <person name="Sun J."/>
            <person name="Hu S."/>
            <person name="Hu X."/>
        </authorList>
    </citation>
    <scope>NUCLEOTIDE SEQUENCE [LARGE SCALE GENOMIC DNA]</scope>
    <source>
        <strain>HLK1</strain>
    </source>
</reference>
<accession>B4RFX6</accession>
<evidence type="ECO:0000255" key="1">
    <source>
        <dbReference type="HAMAP-Rule" id="MF_00336"/>
    </source>
</evidence>
<dbReference type="EC" id="6.3.3.3" evidence="1"/>
<dbReference type="EMBL" id="CP000747">
    <property type="protein sequence ID" value="ACG78789.1"/>
    <property type="molecule type" value="Genomic_DNA"/>
</dbReference>
<dbReference type="RefSeq" id="WP_012522929.1">
    <property type="nucleotide sequence ID" value="NC_011144.1"/>
</dbReference>
<dbReference type="SMR" id="B4RFX6"/>
<dbReference type="STRING" id="450851.PHZ_c2380"/>
<dbReference type="KEGG" id="pzu:PHZ_c2380"/>
<dbReference type="eggNOG" id="COG0132">
    <property type="taxonomic scope" value="Bacteria"/>
</dbReference>
<dbReference type="HOGENOM" id="CLU_072551_3_0_5"/>
<dbReference type="OrthoDB" id="9802097at2"/>
<dbReference type="UniPathway" id="UPA00078">
    <property type="reaction ID" value="UER00161"/>
</dbReference>
<dbReference type="Proteomes" id="UP000001868">
    <property type="component" value="Chromosome"/>
</dbReference>
<dbReference type="GO" id="GO:0005829">
    <property type="term" value="C:cytosol"/>
    <property type="evidence" value="ECO:0007669"/>
    <property type="project" value="TreeGrafter"/>
</dbReference>
<dbReference type="GO" id="GO:0005524">
    <property type="term" value="F:ATP binding"/>
    <property type="evidence" value="ECO:0007669"/>
    <property type="project" value="UniProtKB-UniRule"/>
</dbReference>
<dbReference type="GO" id="GO:0004141">
    <property type="term" value="F:dethiobiotin synthase activity"/>
    <property type="evidence" value="ECO:0007669"/>
    <property type="project" value="UniProtKB-UniRule"/>
</dbReference>
<dbReference type="GO" id="GO:0000287">
    <property type="term" value="F:magnesium ion binding"/>
    <property type="evidence" value="ECO:0007669"/>
    <property type="project" value="UniProtKB-UniRule"/>
</dbReference>
<dbReference type="GO" id="GO:0009102">
    <property type="term" value="P:biotin biosynthetic process"/>
    <property type="evidence" value="ECO:0007669"/>
    <property type="project" value="UniProtKB-UniRule"/>
</dbReference>
<dbReference type="CDD" id="cd03109">
    <property type="entry name" value="DTBS"/>
    <property type="match status" value="1"/>
</dbReference>
<dbReference type="Gene3D" id="3.40.50.300">
    <property type="entry name" value="P-loop containing nucleotide triphosphate hydrolases"/>
    <property type="match status" value="1"/>
</dbReference>
<dbReference type="HAMAP" id="MF_00336">
    <property type="entry name" value="BioD"/>
    <property type="match status" value="1"/>
</dbReference>
<dbReference type="InterPro" id="IPR004472">
    <property type="entry name" value="DTB_synth_BioD"/>
</dbReference>
<dbReference type="InterPro" id="IPR027417">
    <property type="entry name" value="P-loop_NTPase"/>
</dbReference>
<dbReference type="NCBIfam" id="TIGR00347">
    <property type="entry name" value="bioD"/>
    <property type="match status" value="1"/>
</dbReference>
<dbReference type="PANTHER" id="PTHR43210">
    <property type="entry name" value="DETHIOBIOTIN SYNTHETASE"/>
    <property type="match status" value="1"/>
</dbReference>
<dbReference type="PANTHER" id="PTHR43210:SF5">
    <property type="entry name" value="DETHIOBIOTIN SYNTHETASE"/>
    <property type="match status" value="1"/>
</dbReference>
<dbReference type="Pfam" id="PF13500">
    <property type="entry name" value="AAA_26"/>
    <property type="match status" value="1"/>
</dbReference>
<dbReference type="PIRSF" id="PIRSF006755">
    <property type="entry name" value="DTB_synth"/>
    <property type="match status" value="1"/>
</dbReference>
<dbReference type="SUPFAM" id="SSF52540">
    <property type="entry name" value="P-loop containing nucleoside triphosphate hydrolases"/>
    <property type="match status" value="1"/>
</dbReference>
<organism>
    <name type="scientific">Phenylobacterium zucineum (strain HLK1)</name>
    <dbReference type="NCBI Taxonomy" id="450851"/>
    <lineage>
        <taxon>Bacteria</taxon>
        <taxon>Pseudomonadati</taxon>
        <taxon>Pseudomonadota</taxon>
        <taxon>Alphaproteobacteria</taxon>
        <taxon>Caulobacterales</taxon>
        <taxon>Caulobacteraceae</taxon>
        <taxon>Phenylobacterium</taxon>
    </lineage>
</organism>
<gene>
    <name evidence="1" type="primary">bioD</name>
    <name type="ordered locus">PHZ_c2380</name>
</gene>
<name>BIOD_PHEZH</name>
<comment type="function">
    <text evidence="1">Catalyzes a mechanistically unusual reaction, the ATP-dependent insertion of CO2 between the N7 and N8 nitrogen atoms of 7,8-diaminopelargonic acid (DAPA, also called 7,8-diammoniononanoate) to form a ureido ring.</text>
</comment>
<comment type="catalytic activity">
    <reaction evidence="1">
        <text>(7R,8S)-7,8-diammoniononanoate + CO2 + ATP = (4R,5S)-dethiobiotin + ADP + phosphate + 3 H(+)</text>
        <dbReference type="Rhea" id="RHEA:15805"/>
        <dbReference type="ChEBI" id="CHEBI:15378"/>
        <dbReference type="ChEBI" id="CHEBI:16526"/>
        <dbReference type="ChEBI" id="CHEBI:30616"/>
        <dbReference type="ChEBI" id="CHEBI:43474"/>
        <dbReference type="ChEBI" id="CHEBI:149469"/>
        <dbReference type="ChEBI" id="CHEBI:149473"/>
        <dbReference type="ChEBI" id="CHEBI:456216"/>
        <dbReference type="EC" id="6.3.3.3"/>
    </reaction>
</comment>
<comment type="cofactor">
    <cofactor evidence="1">
        <name>Mg(2+)</name>
        <dbReference type="ChEBI" id="CHEBI:18420"/>
    </cofactor>
</comment>
<comment type="pathway">
    <text evidence="1">Cofactor biosynthesis; biotin biosynthesis; biotin from 7,8-diaminononanoate: step 1/2.</text>
</comment>
<comment type="subunit">
    <text evidence="1">Homodimer.</text>
</comment>
<comment type="subcellular location">
    <subcellularLocation>
        <location evidence="1">Cytoplasm</location>
    </subcellularLocation>
</comment>
<comment type="similarity">
    <text evidence="1">Belongs to the dethiobiotin synthetase family.</text>
</comment>
<feature type="chain" id="PRO_1000119880" description="ATP-dependent dethiobiotin synthetase BioD">
    <location>
        <begin position="1"/>
        <end position="234"/>
    </location>
</feature>
<feature type="active site" evidence="1">
    <location>
        <position position="37"/>
    </location>
</feature>
<feature type="binding site" evidence="1">
    <location>
        <begin position="12"/>
        <end position="17"/>
    </location>
    <ligand>
        <name>ATP</name>
        <dbReference type="ChEBI" id="CHEBI:30616"/>
    </ligand>
</feature>
<feature type="binding site" evidence="1">
    <location>
        <position position="16"/>
    </location>
    <ligand>
        <name>Mg(2+)</name>
        <dbReference type="ChEBI" id="CHEBI:18420"/>
    </ligand>
</feature>
<feature type="binding site" evidence="1">
    <location>
        <position position="41"/>
    </location>
    <ligand>
        <name>substrate</name>
    </ligand>
</feature>
<feature type="binding site" evidence="1">
    <location>
        <position position="52"/>
    </location>
    <ligand>
        <name>ATP</name>
        <dbReference type="ChEBI" id="CHEBI:30616"/>
    </ligand>
</feature>
<feature type="binding site" evidence="1">
    <location>
        <position position="52"/>
    </location>
    <ligand>
        <name>Mg(2+)</name>
        <dbReference type="ChEBI" id="CHEBI:18420"/>
    </ligand>
</feature>
<feature type="binding site" evidence="1">
    <location>
        <begin position="118"/>
        <end position="121"/>
    </location>
    <ligand>
        <name>ATP</name>
        <dbReference type="ChEBI" id="CHEBI:30616"/>
    </ligand>
</feature>
<feature type="binding site" evidence="1">
    <location>
        <position position="118"/>
    </location>
    <ligand>
        <name>Mg(2+)</name>
        <dbReference type="ChEBI" id="CHEBI:18420"/>
    </ligand>
</feature>
<feature type="binding site" evidence="1">
    <location>
        <begin position="178"/>
        <end position="179"/>
    </location>
    <ligand>
        <name>ATP</name>
        <dbReference type="ChEBI" id="CHEBI:30616"/>
    </ligand>
</feature>
<sequence>MSRYFVAGSHTDVGKTFVSCQLIRAERAAGRSATAFKPVLSGFDPDRAEASDAGQLLEALGEPVTSTRLDRISPLRFIAPLAPPSAARLEGVVLTRDRLLTLSNAWLSRTDADLNLLEGAGGVMSPIAEDATNLDLMTGLGLPVILVGGSYLGAISHTLTALEVLRTRSLTIAAVVVSQSADPEAPDFAETVELTRQHAGGVPIFAAPRNGHAAWASALTEALAARRRLRTSAA</sequence>